<organism>
    <name type="scientific">Schizosaccharomyces pombe (strain 972 / ATCC 24843)</name>
    <name type="common">Fission yeast</name>
    <dbReference type="NCBI Taxonomy" id="284812"/>
    <lineage>
        <taxon>Eukaryota</taxon>
        <taxon>Fungi</taxon>
        <taxon>Dikarya</taxon>
        <taxon>Ascomycota</taxon>
        <taxon>Taphrinomycotina</taxon>
        <taxon>Schizosaccharomycetes</taxon>
        <taxon>Schizosaccharomycetales</taxon>
        <taxon>Schizosaccharomycetaceae</taxon>
        <taxon>Schizosaccharomyces</taxon>
    </lineage>
</organism>
<feature type="chain" id="PRO_0000357059" description="O-glycoside alpha-1,2-mannosyltransferase homolog 5">
    <location>
        <begin position="1"/>
        <end position="421"/>
    </location>
</feature>
<feature type="active site" description="Nucleophile" evidence="2">
    <location>
        <position position="318"/>
    </location>
</feature>
<evidence type="ECO:0000250" key="1"/>
<evidence type="ECO:0000255" key="2"/>
<evidence type="ECO:0000269" key="3">
    <source>
    </source>
</evidence>
<evidence type="ECO:0000305" key="4"/>
<reference key="1">
    <citation type="journal article" date="2000" name="Yeast">
        <title>A 38 kb segment containing the cdc2 gene from the left arm of fission yeast chromosome II: sequence analysis and characterization of the genomic DNA and cDNAs encoded on the segment.</title>
        <authorList>
            <person name="Machida M."/>
            <person name="Yamazaki S."/>
            <person name="Kunihiro S."/>
            <person name="Tanaka T."/>
            <person name="Kushida N."/>
            <person name="Jinno K."/>
            <person name="Haikawa Y."/>
            <person name="Yamazaki J."/>
            <person name="Yamamoto S."/>
            <person name="Sekine M."/>
            <person name="Oguchi A."/>
            <person name="Nagai Y."/>
            <person name="Sakai M."/>
            <person name="Aoki K."/>
            <person name="Ogura K."/>
            <person name="Kudoh Y."/>
            <person name="Kikuchi H."/>
            <person name="Zhang M.Q."/>
            <person name="Yanagida M."/>
        </authorList>
    </citation>
    <scope>NUCLEOTIDE SEQUENCE [LARGE SCALE GENOMIC DNA]</scope>
    <source>
        <strain>972 / ATCC 24843</strain>
    </source>
</reference>
<reference key="2">
    <citation type="journal article" date="2002" name="Nature">
        <title>The genome sequence of Schizosaccharomyces pombe.</title>
        <authorList>
            <person name="Wood V."/>
            <person name="Gwilliam R."/>
            <person name="Rajandream M.A."/>
            <person name="Lyne M.H."/>
            <person name="Lyne R."/>
            <person name="Stewart A."/>
            <person name="Sgouros J.G."/>
            <person name="Peat N."/>
            <person name="Hayles J."/>
            <person name="Baker S.G."/>
            <person name="Basham D."/>
            <person name="Bowman S."/>
            <person name="Brooks K."/>
            <person name="Brown D."/>
            <person name="Brown S."/>
            <person name="Chillingworth T."/>
            <person name="Churcher C.M."/>
            <person name="Collins M."/>
            <person name="Connor R."/>
            <person name="Cronin A."/>
            <person name="Davis P."/>
            <person name="Feltwell T."/>
            <person name="Fraser A."/>
            <person name="Gentles S."/>
            <person name="Goble A."/>
            <person name="Hamlin N."/>
            <person name="Harris D.E."/>
            <person name="Hidalgo J."/>
            <person name="Hodgson G."/>
            <person name="Holroyd S."/>
            <person name="Hornsby T."/>
            <person name="Howarth S."/>
            <person name="Huckle E.J."/>
            <person name="Hunt S."/>
            <person name="Jagels K."/>
            <person name="James K.D."/>
            <person name="Jones L."/>
            <person name="Jones M."/>
            <person name="Leather S."/>
            <person name="McDonald S."/>
            <person name="McLean J."/>
            <person name="Mooney P."/>
            <person name="Moule S."/>
            <person name="Mungall K.L."/>
            <person name="Murphy L.D."/>
            <person name="Niblett D."/>
            <person name="Odell C."/>
            <person name="Oliver K."/>
            <person name="O'Neil S."/>
            <person name="Pearson D."/>
            <person name="Quail M.A."/>
            <person name="Rabbinowitsch E."/>
            <person name="Rutherford K.M."/>
            <person name="Rutter S."/>
            <person name="Saunders D."/>
            <person name="Seeger K."/>
            <person name="Sharp S."/>
            <person name="Skelton J."/>
            <person name="Simmonds M.N."/>
            <person name="Squares R."/>
            <person name="Squares S."/>
            <person name="Stevens K."/>
            <person name="Taylor K."/>
            <person name="Taylor R.G."/>
            <person name="Tivey A."/>
            <person name="Walsh S.V."/>
            <person name="Warren T."/>
            <person name="Whitehead S."/>
            <person name="Woodward J.R."/>
            <person name="Volckaert G."/>
            <person name="Aert R."/>
            <person name="Robben J."/>
            <person name="Grymonprez B."/>
            <person name="Weltjens I."/>
            <person name="Vanstreels E."/>
            <person name="Rieger M."/>
            <person name="Schaefer M."/>
            <person name="Mueller-Auer S."/>
            <person name="Gabel C."/>
            <person name="Fuchs M."/>
            <person name="Duesterhoeft A."/>
            <person name="Fritzc C."/>
            <person name="Holzer E."/>
            <person name="Moestl D."/>
            <person name="Hilbert H."/>
            <person name="Borzym K."/>
            <person name="Langer I."/>
            <person name="Beck A."/>
            <person name="Lehrach H."/>
            <person name="Reinhardt R."/>
            <person name="Pohl T.M."/>
            <person name="Eger P."/>
            <person name="Zimmermann W."/>
            <person name="Wedler H."/>
            <person name="Wambutt R."/>
            <person name="Purnelle B."/>
            <person name="Goffeau A."/>
            <person name="Cadieu E."/>
            <person name="Dreano S."/>
            <person name="Gloux S."/>
            <person name="Lelaure V."/>
            <person name="Mottier S."/>
            <person name="Galibert F."/>
            <person name="Aves S.J."/>
            <person name="Xiang Z."/>
            <person name="Hunt C."/>
            <person name="Moore K."/>
            <person name="Hurst S.M."/>
            <person name="Lucas M."/>
            <person name="Rochet M."/>
            <person name="Gaillardin C."/>
            <person name="Tallada V.A."/>
            <person name="Garzon A."/>
            <person name="Thode G."/>
            <person name="Daga R.R."/>
            <person name="Cruzado L."/>
            <person name="Jimenez J."/>
            <person name="Sanchez M."/>
            <person name="del Rey F."/>
            <person name="Benito J."/>
            <person name="Dominguez A."/>
            <person name="Revuelta J.L."/>
            <person name="Moreno S."/>
            <person name="Armstrong J."/>
            <person name="Forsburg S.L."/>
            <person name="Cerutti L."/>
            <person name="Lowe T."/>
            <person name="McCombie W.R."/>
            <person name="Paulsen I."/>
            <person name="Potashkin J."/>
            <person name="Shpakovski G.V."/>
            <person name="Ussery D."/>
            <person name="Barrell B.G."/>
            <person name="Nurse P."/>
        </authorList>
    </citation>
    <scope>NUCLEOTIDE SEQUENCE [LARGE SCALE GENOMIC DNA]</scope>
    <source>
        <strain>972 / ATCC 24843</strain>
    </source>
</reference>
<reference key="3">
    <citation type="journal article" date="2006" name="Nat. Biotechnol.">
        <title>ORFeome cloning and global analysis of protein localization in the fission yeast Schizosaccharomyces pombe.</title>
        <authorList>
            <person name="Matsuyama A."/>
            <person name="Arai R."/>
            <person name="Yashiroda Y."/>
            <person name="Shirai A."/>
            <person name="Kamata A."/>
            <person name="Sekido S."/>
            <person name="Kobayashi Y."/>
            <person name="Hashimoto A."/>
            <person name="Hamamoto M."/>
            <person name="Hiraoka Y."/>
            <person name="Horinouchi S."/>
            <person name="Yoshida M."/>
        </authorList>
    </citation>
    <scope>SUBCELLULAR LOCATION [LARGE SCALE ANALYSIS]</scope>
</reference>
<reference key="4">
    <citation type="journal article" date="2009" name="FEMS Yeast Res.">
        <title>Identification and characterization of a gene required for alpha1,2-mannose extension in the O-linked glycan synthesis pathway in Schizosaccharomyces pombe.</title>
        <authorList>
            <person name="Ikeda Y."/>
            <person name="Ohashi T."/>
            <person name="Tanaka N."/>
            <person name="Takegawa K."/>
        </authorList>
    </citation>
    <scope>IDENTIFICATION</scope>
</reference>
<name>OMH5_SCHPO</name>
<protein>
    <recommendedName>
        <fullName>O-glycoside alpha-1,2-mannosyltransferase homolog 5</fullName>
        <ecNumber>2.4.1.-</ecNumber>
    </recommendedName>
</protein>
<sequence length="421" mass="49918">MKRYDTLHVWKLIKLLICKFLLFHDFGTALFTSLVKASMLGFHNWRRTYWLYLKKLRPINDTYDAPFAIGCKNVAYEASQYPRMNATFMVLARNSDLDGVLSSMNSIERRFNRHFKYPYVFLNDEPFTTEFKKAVKDATDSSIQFGVLDDELWNFPKDVDKDMIDESIAEQVGVVYANFPSYHKMCRFFSRNFYKHPLMQQYEWYWRLEPEVTFSCDISYDPFYYMDKHNKVYGYVIAIKELAKTVPNLFRYTVAHQKISNLPTTDLWSFFLDKRYETRIKKLKEEQKDQGYYVLPEPPLNRIDGQIYNLCHFWSNFEIARLDFYNSKEYNEYVDALENAGGFWTERWGDAPVHSLAVGLLLNRSQVHYFRDLGYQHSTIQHCGQEYGCNCDCPFNIPDYETKPGSCINEWASVMGGFLDE</sequence>
<comment type="function">
    <text evidence="1">Probable mannosyltransferase involved in O-glycosylation of cell wall and secreted proteins.</text>
</comment>
<comment type="subcellular location">
    <subcellularLocation>
        <location evidence="3">Cytoplasm</location>
    </subcellularLocation>
</comment>
<comment type="similarity">
    <text evidence="4">Belongs to the glycosyltransferase 15 family.</text>
</comment>
<comment type="sequence caution" evidence="4">
    <conflict type="erroneous gene model prediction">
        <sequence resource="EMBL-CDS" id="BAA21393"/>
    </conflict>
</comment>
<comment type="sequence caution" evidence="4">
    <conflict type="erroneous gene model prediction">
        <sequence resource="EMBL-CDS" id="BAA21395"/>
    </conflict>
</comment>
<accession>Q96WW1</accession>
<accession>O14452</accession>
<accession>Q9UTS1</accession>
<proteinExistence type="inferred from homology"/>
<dbReference type="EC" id="2.4.1.-"/>
<dbReference type="EMBL" id="AB004535">
    <property type="protein sequence ID" value="BAA21395.1"/>
    <property type="status" value="ALT_SEQ"/>
    <property type="molecule type" value="Genomic_DNA"/>
</dbReference>
<dbReference type="EMBL" id="AB004534">
    <property type="protein sequence ID" value="BAA21393.2"/>
    <property type="status" value="ALT_SEQ"/>
    <property type="molecule type" value="Genomic_DNA"/>
</dbReference>
<dbReference type="EMBL" id="CU329671">
    <property type="protein sequence ID" value="CAC37498.2"/>
    <property type="molecule type" value="Genomic_DNA"/>
</dbReference>
<dbReference type="RefSeq" id="NP_595614.2">
    <property type="nucleotide sequence ID" value="NM_001021509.2"/>
</dbReference>
<dbReference type="SMR" id="Q96WW1"/>
<dbReference type="BioGRID" id="276758">
    <property type="interactions" value="15"/>
</dbReference>
<dbReference type="FunCoup" id="Q96WW1">
    <property type="interactions" value="93"/>
</dbReference>
<dbReference type="STRING" id="284812.Q96WW1"/>
<dbReference type="CAZy" id="GT15">
    <property type="family name" value="Glycosyltransferase Family 15"/>
</dbReference>
<dbReference type="iPTMnet" id="Q96WW1"/>
<dbReference type="PaxDb" id="4896-SPBC32H8.08c.1"/>
<dbReference type="EnsemblFungi" id="SPBC32H8.08c.1">
    <property type="protein sequence ID" value="SPBC32H8.08c.1:pep"/>
    <property type="gene ID" value="SPBC32H8.08c"/>
</dbReference>
<dbReference type="GeneID" id="2540226"/>
<dbReference type="KEGG" id="spo:2540226"/>
<dbReference type="PomBase" id="SPBC32H8.08c">
    <property type="gene designation" value="omh5"/>
</dbReference>
<dbReference type="VEuPathDB" id="FungiDB:SPBC32H8.08c"/>
<dbReference type="eggNOG" id="KOG4472">
    <property type="taxonomic scope" value="Eukaryota"/>
</dbReference>
<dbReference type="HOGENOM" id="CLU_024327_2_1_1"/>
<dbReference type="InParanoid" id="Q96WW1"/>
<dbReference type="OMA" id="YQHSTIQ"/>
<dbReference type="PhylomeDB" id="Q96WW1"/>
<dbReference type="PRO" id="PR:Q96WW1"/>
<dbReference type="Proteomes" id="UP000002485">
    <property type="component" value="Chromosome II"/>
</dbReference>
<dbReference type="GO" id="GO:0005829">
    <property type="term" value="C:cytosol"/>
    <property type="evidence" value="ECO:0007005"/>
    <property type="project" value="PomBase"/>
</dbReference>
<dbReference type="GO" id="GO:0005794">
    <property type="term" value="C:Golgi apparatus"/>
    <property type="evidence" value="ECO:0000318"/>
    <property type="project" value="GO_Central"/>
</dbReference>
<dbReference type="GO" id="GO:0000139">
    <property type="term" value="C:Golgi membrane"/>
    <property type="evidence" value="ECO:0000250"/>
    <property type="project" value="PomBase"/>
</dbReference>
<dbReference type="GO" id="GO:0000026">
    <property type="term" value="F:alpha-1,2-mannosyltransferase activity"/>
    <property type="evidence" value="ECO:0000318"/>
    <property type="project" value="GO_Central"/>
</dbReference>
<dbReference type="GO" id="GO:0000032">
    <property type="term" value="P:cell wall mannoprotein biosynthetic process"/>
    <property type="evidence" value="ECO:0000318"/>
    <property type="project" value="GO_Central"/>
</dbReference>
<dbReference type="GO" id="GO:0006487">
    <property type="term" value="P:protein N-linked glycosylation"/>
    <property type="evidence" value="ECO:0000318"/>
    <property type="project" value="GO_Central"/>
</dbReference>
<dbReference type="FunFam" id="3.90.550.10:FF:000102">
    <property type="entry name" value="Alpha-1,2-mannosyltransferase (Kre5)"/>
    <property type="match status" value="1"/>
</dbReference>
<dbReference type="Gene3D" id="3.90.550.10">
    <property type="entry name" value="Spore Coat Polysaccharide Biosynthesis Protein SpsA, Chain A"/>
    <property type="match status" value="1"/>
</dbReference>
<dbReference type="InterPro" id="IPR002685">
    <property type="entry name" value="Glyco_trans_15"/>
</dbReference>
<dbReference type="InterPro" id="IPR029044">
    <property type="entry name" value="Nucleotide-diphossugar_trans"/>
</dbReference>
<dbReference type="PANTHER" id="PTHR31121">
    <property type="entry name" value="ALPHA-1,2 MANNOSYLTRANSFERASE KTR1"/>
    <property type="match status" value="1"/>
</dbReference>
<dbReference type="PANTHER" id="PTHR31121:SF2">
    <property type="entry name" value="MANNOSYLTRANSFERASE KTR5-RELATED"/>
    <property type="match status" value="1"/>
</dbReference>
<dbReference type="Pfam" id="PF01793">
    <property type="entry name" value="Glyco_transf_15"/>
    <property type="match status" value="1"/>
</dbReference>
<dbReference type="PIRSF" id="PIRSF018153">
    <property type="entry name" value="Glyco_trans_15"/>
    <property type="match status" value="1"/>
</dbReference>
<dbReference type="SUPFAM" id="SSF53448">
    <property type="entry name" value="Nucleotide-diphospho-sugar transferases"/>
    <property type="match status" value="1"/>
</dbReference>
<keyword id="KW-0963">Cytoplasm</keyword>
<keyword id="KW-0328">Glycosyltransferase</keyword>
<keyword id="KW-1185">Reference proteome</keyword>
<keyword id="KW-0808">Transferase</keyword>
<gene>
    <name type="primary">omh5</name>
    <name type="ORF">pi016</name>
    <name type="ORF">SPBC32H8.08c</name>
</gene>